<dbReference type="EC" id="3.4.24.-" evidence="1"/>
<dbReference type="EMBL" id="CP001872">
    <property type="protein sequence ID" value="ADC30208.1"/>
    <property type="molecule type" value="Genomic_DNA"/>
</dbReference>
<dbReference type="SMR" id="D3FFN2"/>
<dbReference type="KEGG" id="mgh:MGAH_0659"/>
<dbReference type="PATRIC" id="fig|710128.3.peg.30"/>
<dbReference type="HOGENOM" id="CLU_000688_16_2_14"/>
<dbReference type="GO" id="GO:0005886">
    <property type="term" value="C:plasma membrane"/>
    <property type="evidence" value="ECO:0007669"/>
    <property type="project" value="UniProtKB-SubCell"/>
</dbReference>
<dbReference type="GO" id="GO:0005524">
    <property type="term" value="F:ATP binding"/>
    <property type="evidence" value="ECO:0007669"/>
    <property type="project" value="UniProtKB-UniRule"/>
</dbReference>
<dbReference type="GO" id="GO:0016887">
    <property type="term" value="F:ATP hydrolysis activity"/>
    <property type="evidence" value="ECO:0007669"/>
    <property type="project" value="UniProtKB-UniRule"/>
</dbReference>
<dbReference type="GO" id="GO:0004176">
    <property type="term" value="F:ATP-dependent peptidase activity"/>
    <property type="evidence" value="ECO:0007669"/>
    <property type="project" value="InterPro"/>
</dbReference>
<dbReference type="GO" id="GO:0004222">
    <property type="term" value="F:metalloendopeptidase activity"/>
    <property type="evidence" value="ECO:0007669"/>
    <property type="project" value="InterPro"/>
</dbReference>
<dbReference type="GO" id="GO:0008270">
    <property type="term" value="F:zinc ion binding"/>
    <property type="evidence" value="ECO:0007669"/>
    <property type="project" value="UniProtKB-UniRule"/>
</dbReference>
<dbReference type="GO" id="GO:0030163">
    <property type="term" value="P:protein catabolic process"/>
    <property type="evidence" value="ECO:0007669"/>
    <property type="project" value="UniProtKB-UniRule"/>
</dbReference>
<dbReference type="GO" id="GO:0006508">
    <property type="term" value="P:proteolysis"/>
    <property type="evidence" value="ECO:0007669"/>
    <property type="project" value="UniProtKB-KW"/>
</dbReference>
<dbReference type="CDD" id="cd19501">
    <property type="entry name" value="RecA-like_FtsH"/>
    <property type="match status" value="1"/>
</dbReference>
<dbReference type="FunFam" id="1.10.8.60:FF:000001">
    <property type="entry name" value="ATP-dependent zinc metalloprotease FtsH"/>
    <property type="match status" value="1"/>
</dbReference>
<dbReference type="FunFam" id="1.20.58.760:FF:000001">
    <property type="entry name" value="ATP-dependent zinc metalloprotease FtsH"/>
    <property type="match status" value="1"/>
</dbReference>
<dbReference type="FunFam" id="3.40.50.300:FF:000352">
    <property type="entry name" value="ATP-dependent zinc metalloprotease FTSH 7, chloroplastic"/>
    <property type="match status" value="1"/>
</dbReference>
<dbReference type="Gene3D" id="1.10.8.60">
    <property type="match status" value="1"/>
</dbReference>
<dbReference type="Gene3D" id="3.40.50.300">
    <property type="entry name" value="P-loop containing nucleotide triphosphate hydrolases"/>
    <property type="match status" value="1"/>
</dbReference>
<dbReference type="Gene3D" id="1.20.58.760">
    <property type="entry name" value="Peptidase M41"/>
    <property type="match status" value="1"/>
</dbReference>
<dbReference type="HAMAP" id="MF_01458">
    <property type="entry name" value="FtsH"/>
    <property type="match status" value="1"/>
</dbReference>
<dbReference type="InterPro" id="IPR003593">
    <property type="entry name" value="AAA+_ATPase"/>
</dbReference>
<dbReference type="InterPro" id="IPR041569">
    <property type="entry name" value="AAA_lid_3"/>
</dbReference>
<dbReference type="InterPro" id="IPR003959">
    <property type="entry name" value="ATPase_AAA_core"/>
</dbReference>
<dbReference type="InterPro" id="IPR003960">
    <property type="entry name" value="ATPase_AAA_CS"/>
</dbReference>
<dbReference type="InterPro" id="IPR005936">
    <property type="entry name" value="FtsH"/>
</dbReference>
<dbReference type="InterPro" id="IPR027417">
    <property type="entry name" value="P-loop_NTPase"/>
</dbReference>
<dbReference type="InterPro" id="IPR000642">
    <property type="entry name" value="Peptidase_M41"/>
</dbReference>
<dbReference type="InterPro" id="IPR037219">
    <property type="entry name" value="Peptidase_M41-like"/>
</dbReference>
<dbReference type="NCBIfam" id="TIGR01241">
    <property type="entry name" value="FtsH_fam"/>
    <property type="match status" value="1"/>
</dbReference>
<dbReference type="PANTHER" id="PTHR23076:SF97">
    <property type="entry name" value="ATP-DEPENDENT ZINC METALLOPROTEASE YME1L1"/>
    <property type="match status" value="1"/>
</dbReference>
<dbReference type="PANTHER" id="PTHR23076">
    <property type="entry name" value="METALLOPROTEASE M41 FTSH"/>
    <property type="match status" value="1"/>
</dbReference>
<dbReference type="Pfam" id="PF00004">
    <property type="entry name" value="AAA"/>
    <property type="match status" value="1"/>
</dbReference>
<dbReference type="Pfam" id="PF17862">
    <property type="entry name" value="AAA_lid_3"/>
    <property type="match status" value="1"/>
</dbReference>
<dbReference type="Pfam" id="PF01434">
    <property type="entry name" value="Peptidase_M41"/>
    <property type="match status" value="1"/>
</dbReference>
<dbReference type="SMART" id="SM00382">
    <property type="entry name" value="AAA"/>
    <property type="match status" value="1"/>
</dbReference>
<dbReference type="SUPFAM" id="SSF140990">
    <property type="entry name" value="FtsH protease domain-like"/>
    <property type="match status" value="1"/>
</dbReference>
<dbReference type="SUPFAM" id="SSF52540">
    <property type="entry name" value="P-loop containing nucleoside triphosphate hydrolases"/>
    <property type="match status" value="1"/>
</dbReference>
<dbReference type="PROSITE" id="PS00674">
    <property type="entry name" value="AAA"/>
    <property type="match status" value="1"/>
</dbReference>
<reference key="1">
    <citation type="journal article" date="2010" name="Infect. Immun.">
        <title>Comparative genomic analyses of attenuated strains of Mycoplasma gallisepticum.</title>
        <authorList>
            <person name="Szczepanek S.M."/>
            <person name="Tulman E.R."/>
            <person name="Gorton T.S."/>
            <person name="Liao X."/>
            <person name="Lu Z."/>
            <person name="Zinski J."/>
            <person name="Aziz F."/>
            <person name="Frasca S. Jr."/>
            <person name="Kutish G.F."/>
            <person name="Geary S.J."/>
        </authorList>
    </citation>
    <scope>NUCLEOTIDE SEQUENCE [LARGE SCALE GENOMIC DNA]</scope>
    <source>
        <strain>R(high / passage 156)</strain>
    </source>
</reference>
<feature type="chain" id="PRO_0000400359" description="ATP-dependent zinc metalloprotease FtsH">
    <location>
        <begin position="1"/>
        <end position="765"/>
    </location>
</feature>
<feature type="topological domain" description="Cytoplasmic" evidence="1">
    <location>
        <begin position="1"/>
        <end position="27"/>
    </location>
</feature>
<feature type="transmembrane region" description="Helical" evidence="1">
    <location>
        <begin position="28"/>
        <end position="48"/>
    </location>
</feature>
<feature type="topological domain" description="Extracellular" evidence="1">
    <location>
        <begin position="49"/>
        <end position="213"/>
    </location>
</feature>
<feature type="transmembrane region" description="Helical" evidence="1">
    <location>
        <begin position="214"/>
        <end position="234"/>
    </location>
</feature>
<feature type="topological domain" description="Cytoplasmic" evidence="1">
    <location>
        <begin position="235"/>
        <end position="765"/>
    </location>
</feature>
<feature type="region of interest" description="Disordered" evidence="2">
    <location>
        <begin position="730"/>
        <end position="765"/>
    </location>
</feature>
<feature type="compositionally biased region" description="Basic and acidic residues" evidence="2">
    <location>
        <begin position="730"/>
        <end position="748"/>
    </location>
</feature>
<feature type="compositionally biased region" description="Polar residues" evidence="2">
    <location>
        <begin position="749"/>
        <end position="765"/>
    </location>
</feature>
<feature type="active site" evidence="1">
    <location>
        <position position="537"/>
    </location>
</feature>
<feature type="binding site" evidence="1">
    <location>
        <begin position="314"/>
        <end position="321"/>
    </location>
    <ligand>
        <name>ATP</name>
        <dbReference type="ChEBI" id="CHEBI:30616"/>
    </ligand>
</feature>
<feature type="binding site" evidence="1">
    <location>
        <position position="536"/>
    </location>
    <ligand>
        <name>Zn(2+)</name>
        <dbReference type="ChEBI" id="CHEBI:29105"/>
        <note>catalytic</note>
    </ligand>
</feature>
<feature type="binding site" evidence="1">
    <location>
        <position position="540"/>
    </location>
    <ligand>
        <name>Zn(2+)</name>
        <dbReference type="ChEBI" id="CHEBI:29105"/>
        <note>catalytic</note>
    </ligand>
</feature>
<feature type="binding site" evidence="1">
    <location>
        <position position="615"/>
    </location>
    <ligand>
        <name>Zn(2+)</name>
        <dbReference type="ChEBI" id="CHEBI:29105"/>
        <note>catalytic</note>
    </ligand>
</feature>
<sequence length="765" mass="82881">MSNTSNFNERVTENAKPPKNVKSIIWKTIGIIIVMAIIIGLILFYVLPRNTIANISNIQYVDGNLVATATINGRSGRFILDLENSTYQTSYTSGLSLSISVFLRNLNNANGQSFFVSLIRPATSSANDAVFNIANLSINQTRGVATLVTEGGSYSAVLTTTLTALPLTGQKFLPEGFNLDTANTDAYRAAGAIPGIQRLLAVGNVQLPNQSTAILTQFLTSIIPFVILIVIYIVIARRFSRTMGAGGAIGEDGENVFTIGKSQAKLAKSTFKFTDVAGIEEEKSELIELVDYLKRPGKYVQMGARTPRGVVLYGPPGTGKTLLAKAVAGEAGVPFFQVTGSAFEDMLVGVGAKRVRNLFAKAKKAAPCIIFIDEIDSVGSKRGKYEISAGSATDQTLNQLLAEMDGFSTRTGIIVMAATNRLDVLDDALLRPGRFDRHIQVNLPDIKEREAILKIHSRNKNISSKVNLLDIARRTPGFSGAQLENVLNEATLLAVRADRTSISLTDIDEAIDRVIAGPAKKSRVISDFEKNQVAHHEAGHALVGLHLKGADEVQKITIIPRGQAGGYTLSTPKDAELNLKKKSDLLNMIAGALGGRASEELFFGKDAISTGASNDFYKATNIAKTMVTQLGMSDLGITQFLPSEGGINPNARYYSENTAQRIDEAIAKILEEQYQVAYNIIKDNQNELKLIVEALLIQETIVKNDIDYIHEHLKLPEAIIKLKEEQLKEKAAAEKEEQAEKAKLDHQSDSAQPQEEPTASTASSN</sequence>
<name>FTSH_MYCGH</name>
<protein>
    <recommendedName>
        <fullName evidence="1">ATP-dependent zinc metalloprotease FtsH</fullName>
        <ecNumber evidence="1">3.4.24.-</ecNumber>
    </recommendedName>
</protein>
<gene>
    <name evidence="1" type="primary">ftsH</name>
    <name type="ordered locus">MGAH_0659</name>
</gene>
<comment type="function">
    <text evidence="1">Acts as a processive, ATP-dependent zinc metallopeptidase for both cytoplasmic and membrane proteins. Plays a role in the quality control of integral membrane proteins.</text>
</comment>
<comment type="cofactor">
    <cofactor evidence="1">
        <name>Zn(2+)</name>
        <dbReference type="ChEBI" id="CHEBI:29105"/>
    </cofactor>
    <text evidence="1">Binds 1 zinc ion per subunit.</text>
</comment>
<comment type="subunit">
    <text evidence="1">Homohexamer.</text>
</comment>
<comment type="subcellular location">
    <subcellularLocation>
        <location evidence="1">Cell membrane</location>
        <topology evidence="1">Multi-pass membrane protein</topology>
        <orientation evidence="1">Cytoplasmic side</orientation>
    </subcellularLocation>
</comment>
<comment type="similarity">
    <text evidence="1">In the central section; belongs to the AAA ATPase family.</text>
</comment>
<comment type="similarity">
    <text evidence="1">In the C-terminal section; belongs to the peptidase M41 family.</text>
</comment>
<keyword id="KW-0067">ATP-binding</keyword>
<keyword id="KW-1003">Cell membrane</keyword>
<keyword id="KW-0378">Hydrolase</keyword>
<keyword id="KW-0472">Membrane</keyword>
<keyword id="KW-0479">Metal-binding</keyword>
<keyword id="KW-0482">Metalloprotease</keyword>
<keyword id="KW-0547">Nucleotide-binding</keyword>
<keyword id="KW-0645">Protease</keyword>
<keyword id="KW-0812">Transmembrane</keyword>
<keyword id="KW-1133">Transmembrane helix</keyword>
<keyword id="KW-0862">Zinc</keyword>
<accession>D3FFN2</accession>
<organism>
    <name type="scientific">Mycoplasmoides gallisepticum (strain R(high / passage 156))</name>
    <name type="common">Mycoplasma gallisepticum</name>
    <dbReference type="NCBI Taxonomy" id="710128"/>
    <lineage>
        <taxon>Bacteria</taxon>
        <taxon>Bacillati</taxon>
        <taxon>Mycoplasmatota</taxon>
        <taxon>Mycoplasmoidales</taxon>
        <taxon>Mycoplasmoidaceae</taxon>
        <taxon>Mycoplasmoides</taxon>
    </lineage>
</organism>
<evidence type="ECO:0000255" key="1">
    <source>
        <dbReference type="HAMAP-Rule" id="MF_01458"/>
    </source>
</evidence>
<evidence type="ECO:0000256" key="2">
    <source>
        <dbReference type="SAM" id="MobiDB-lite"/>
    </source>
</evidence>
<proteinExistence type="inferred from homology"/>